<feature type="chain" id="PRO_1000119816" description="Oxygen-dependent coproporphyrinogen-III oxidase">
    <location>
        <begin position="1"/>
        <end position="303"/>
    </location>
</feature>
<feature type="region of interest" description="Important for dimerization" evidence="1">
    <location>
        <begin position="268"/>
        <end position="303"/>
    </location>
</feature>
<feature type="active site" description="Proton donor" evidence="1">
    <location>
        <position position="131"/>
    </location>
</feature>
<feature type="binding site" evidence="1">
    <location>
        <position position="117"/>
    </location>
    <ligand>
        <name>substrate</name>
    </ligand>
</feature>
<feature type="binding site" evidence="1">
    <location>
        <position position="121"/>
    </location>
    <ligand>
        <name>a divalent metal cation</name>
        <dbReference type="ChEBI" id="CHEBI:60240"/>
    </ligand>
</feature>
<feature type="binding site" evidence="1">
    <location>
        <position position="131"/>
    </location>
    <ligand>
        <name>a divalent metal cation</name>
        <dbReference type="ChEBI" id="CHEBI:60240"/>
    </ligand>
</feature>
<feature type="binding site" evidence="1">
    <location>
        <begin position="133"/>
        <end position="135"/>
    </location>
    <ligand>
        <name>substrate</name>
    </ligand>
</feature>
<feature type="binding site" evidence="1">
    <location>
        <position position="169"/>
    </location>
    <ligand>
        <name>a divalent metal cation</name>
        <dbReference type="ChEBI" id="CHEBI:60240"/>
    </ligand>
</feature>
<feature type="binding site" evidence="1">
    <location>
        <position position="199"/>
    </location>
    <ligand>
        <name>a divalent metal cation</name>
        <dbReference type="ChEBI" id="CHEBI:60240"/>
    </ligand>
</feature>
<feature type="binding site" evidence="1">
    <location>
        <begin position="286"/>
        <end position="288"/>
    </location>
    <ligand>
        <name>substrate</name>
    </ligand>
</feature>
<feature type="site" description="Important for dimerization" evidence="1">
    <location>
        <position position="199"/>
    </location>
</feature>
<accession>B5ZY73</accession>
<organism>
    <name type="scientific">Rhizobium leguminosarum bv. trifolii (strain WSM2304)</name>
    <dbReference type="NCBI Taxonomy" id="395492"/>
    <lineage>
        <taxon>Bacteria</taxon>
        <taxon>Pseudomonadati</taxon>
        <taxon>Pseudomonadota</taxon>
        <taxon>Alphaproteobacteria</taxon>
        <taxon>Hyphomicrobiales</taxon>
        <taxon>Rhizobiaceae</taxon>
        <taxon>Rhizobium/Agrobacterium group</taxon>
        <taxon>Rhizobium</taxon>
    </lineage>
</organism>
<evidence type="ECO:0000255" key="1">
    <source>
        <dbReference type="HAMAP-Rule" id="MF_00333"/>
    </source>
</evidence>
<gene>
    <name evidence="1" type="primary">hemF</name>
    <name type="ordered locus">Rleg2_2786</name>
</gene>
<dbReference type="EC" id="1.3.3.3" evidence="1"/>
<dbReference type="EMBL" id="CP001191">
    <property type="protein sequence ID" value="ACI56056.1"/>
    <property type="molecule type" value="Genomic_DNA"/>
</dbReference>
<dbReference type="RefSeq" id="WP_012558512.1">
    <property type="nucleotide sequence ID" value="NC_011369.1"/>
</dbReference>
<dbReference type="SMR" id="B5ZY73"/>
<dbReference type="STRING" id="395492.Rleg2_2786"/>
<dbReference type="KEGG" id="rlt:Rleg2_2786"/>
<dbReference type="eggNOG" id="COG0408">
    <property type="taxonomic scope" value="Bacteria"/>
</dbReference>
<dbReference type="HOGENOM" id="CLU_026169_0_1_5"/>
<dbReference type="UniPathway" id="UPA00251">
    <property type="reaction ID" value="UER00322"/>
</dbReference>
<dbReference type="Proteomes" id="UP000008330">
    <property type="component" value="Chromosome"/>
</dbReference>
<dbReference type="GO" id="GO:0005737">
    <property type="term" value="C:cytoplasm"/>
    <property type="evidence" value="ECO:0007669"/>
    <property type="project" value="UniProtKB-SubCell"/>
</dbReference>
<dbReference type="GO" id="GO:0004109">
    <property type="term" value="F:coproporphyrinogen oxidase activity"/>
    <property type="evidence" value="ECO:0007669"/>
    <property type="project" value="UniProtKB-UniRule"/>
</dbReference>
<dbReference type="GO" id="GO:0046872">
    <property type="term" value="F:metal ion binding"/>
    <property type="evidence" value="ECO:0007669"/>
    <property type="project" value="UniProtKB-KW"/>
</dbReference>
<dbReference type="GO" id="GO:0042803">
    <property type="term" value="F:protein homodimerization activity"/>
    <property type="evidence" value="ECO:0000250"/>
    <property type="project" value="UniProtKB"/>
</dbReference>
<dbReference type="GO" id="GO:0006782">
    <property type="term" value="P:protoporphyrinogen IX biosynthetic process"/>
    <property type="evidence" value="ECO:0007669"/>
    <property type="project" value="UniProtKB-UniRule"/>
</dbReference>
<dbReference type="FunFam" id="3.40.1500.10:FF:000005">
    <property type="entry name" value="Oxygen-dependent coproporphyrinogen-III oxidase"/>
    <property type="match status" value="1"/>
</dbReference>
<dbReference type="Gene3D" id="3.40.1500.10">
    <property type="entry name" value="Coproporphyrinogen III oxidase, aerobic"/>
    <property type="match status" value="1"/>
</dbReference>
<dbReference type="HAMAP" id="MF_00333">
    <property type="entry name" value="Coprogen_oxidas"/>
    <property type="match status" value="1"/>
</dbReference>
<dbReference type="InterPro" id="IPR001260">
    <property type="entry name" value="Coprogen_oxidase_aer"/>
</dbReference>
<dbReference type="InterPro" id="IPR036406">
    <property type="entry name" value="Coprogen_oxidase_aer_sf"/>
</dbReference>
<dbReference type="InterPro" id="IPR018375">
    <property type="entry name" value="Coprogen_oxidase_CS"/>
</dbReference>
<dbReference type="NCBIfam" id="NF003727">
    <property type="entry name" value="PRK05330.1"/>
    <property type="match status" value="1"/>
</dbReference>
<dbReference type="PANTHER" id="PTHR10755">
    <property type="entry name" value="COPROPORPHYRINOGEN III OXIDASE, MITOCHONDRIAL"/>
    <property type="match status" value="1"/>
</dbReference>
<dbReference type="PANTHER" id="PTHR10755:SF0">
    <property type="entry name" value="OXYGEN-DEPENDENT COPROPORPHYRINOGEN-III OXIDASE, MITOCHONDRIAL"/>
    <property type="match status" value="1"/>
</dbReference>
<dbReference type="Pfam" id="PF01218">
    <property type="entry name" value="Coprogen_oxidas"/>
    <property type="match status" value="1"/>
</dbReference>
<dbReference type="PIRSF" id="PIRSF000166">
    <property type="entry name" value="Coproporphyri_ox"/>
    <property type="match status" value="1"/>
</dbReference>
<dbReference type="PRINTS" id="PR00073">
    <property type="entry name" value="COPRGNOXDASE"/>
</dbReference>
<dbReference type="SUPFAM" id="SSF102886">
    <property type="entry name" value="Coproporphyrinogen III oxidase"/>
    <property type="match status" value="1"/>
</dbReference>
<dbReference type="PROSITE" id="PS01021">
    <property type="entry name" value="COPROGEN_OXIDASE"/>
    <property type="match status" value="1"/>
</dbReference>
<reference key="1">
    <citation type="journal article" date="2010" name="Stand. Genomic Sci.">
        <title>Complete genome sequence of Rhizobium leguminosarum bv trifolii strain WSM2304, an effective microsymbiont of the South American clover Trifolium polymorphum.</title>
        <authorList>
            <person name="Reeve W."/>
            <person name="O'Hara G."/>
            <person name="Chain P."/>
            <person name="Ardley J."/>
            <person name="Brau L."/>
            <person name="Nandesena K."/>
            <person name="Tiwari R."/>
            <person name="Malfatti S."/>
            <person name="Kiss H."/>
            <person name="Lapidus A."/>
            <person name="Copeland A."/>
            <person name="Nolan M."/>
            <person name="Land M."/>
            <person name="Ivanova N."/>
            <person name="Mavromatis K."/>
            <person name="Markowitz V."/>
            <person name="Kyrpides N."/>
            <person name="Melino V."/>
            <person name="Denton M."/>
            <person name="Yates R."/>
            <person name="Howieson J."/>
        </authorList>
    </citation>
    <scope>NUCLEOTIDE SEQUENCE [LARGE SCALE GENOMIC DNA]</scope>
    <source>
        <strain>WSM2304</strain>
    </source>
</reference>
<name>HEM6_RHILW</name>
<comment type="function">
    <text evidence="1">Involved in the heme biosynthesis. Catalyzes the aerobic oxidative decarboxylation of propionate groups of rings A and B of coproporphyrinogen-III to yield the vinyl groups in protoporphyrinogen-IX.</text>
</comment>
<comment type="catalytic activity">
    <reaction evidence="1">
        <text>coproporphyrinogen III + O2 + 2 H(+) = protoporphyrinogen IX + 2 CO2 + 2 H2O</text>
        <dbReference type="Rhea" id="RHEA:18257"/>
        <dbReference type="ChEBI" id="CHEBI:15377"/>
        <dbReference type="ChEBI" id="CHEBI:15378"/>
        <dbReference type="ChEBI" id="CHEBI:15379"/>
        <dbReference type="ChEBI" id="CHEBI:16526"/>
        <dbReference type="ChEBI" id="CHEBI:57307"/>
        <dbReference type="ChEBI" id="CHEBI:57309"/>
        <dbReference type="EC" id="1.3.3.3"/>
    </reaction>
</comment>
<comment type="cofactor">
    <cofactor evidence="1">
        <name>a divalent metal cation</name>
        <dbReference type="ChEBI" id="CHEBI:60240"/>
    </cofactor>
</comment>
<comment type="pathway">
    <text evidence="1">Porphyrin-containing compound metabolism; protoporphyrin-IX biosynthesis; protoporphyrinogen-IX from coproporphyrinogen-III (O2 route): step 1/1.</text>
</comment>
<comment type="subunit">
    <text evidence="1">Homodimer.</text>
</comment>
<comment type="subcellular location">
    <subcellularLocation>
        <location evidence="1">Cytoplasm</location>
    </subcellularLocation>
</comment>
<comment type="similarity">
    <text evidence="1">Belongs to the aerobic coproporphyrinogen-III oxidase family.</text>
</comment>
<keyword id="KW-0963">Cytoplasm</keyword>
<keyword id="KW-0350">Heme biosynthesis</keyword>
<keyword id="KW-0479">Metal-binding</keyword>
<keyword id="KW-0560">Oxidoreductase</keyword>
<keyword id="KW-0627">Porphyrin biosynthesis</keyword>
<keyword id="KW-1185">Reference proteome</keyword>
<protein>
    <recommendedName>
        <fullName evidence="1">Oxygen-dependent coproporphyrinogen-III oxidase</fullName>
        <shortName evidence="1">CPO</shortName>
        <shortName evidence="1">Coprogen oxidase</shortName>
        <shortName evidence="1">Coproporphyrinogenase</shortName>
        <ecNumber evidence="1">1.3.3.3</ecNumber>
    </recommendedName>
</protein>
<proteinExistence type="inferred from homology"/>
<sequence length="303" mass="34253">MERPELPIGLPEDIEEKKAAARSWFEGLRDTICASFEALEDELEGPLSDQEPGRFVAKDWSRENGAGGGGRMSMMEGRVFEKVGVHTSTVHGEFSPDFRAQIPGAKDDPRFWASGISLIAHPVNPNVPAVHMNTRMVVTSSRWFGGGADLTPVLSRRRTQEDEDSQLFHKAMEIACRNHAVADYDAYKAWCDDYFFLKHRNEARGIGGIFYDWLHSNEDAGGWDADFAFTRDVGRAFSMVYPKIVRSNFNKLWTEADRDEQLIRRGRYVEFNLLYDRGTIFGLKTGGNVESILSSLPPVVRWP</sequence>